<keyword id="KW-0067">ATP-binding</keyword>
<keyword id="KW-0173">Coenzyme A biosynthesis</keyword>
<keyword id="KW-0963">Cytoplasm</keyword>
<keyword id="KW-0460">Magnesium</keyword>
<keyword id="KW-0547">Nucleotide-binding</keyword>
<keyword id="KW-0548">Nucleotidyltransferase</keyword>
<keyword id="KW-1185">Reference proteome</keyword>
<keyword id="KW-0808">Transferase</keyword>
<reference key="1">
    <citation type="journal article" date="2006" name="Nat. Biotechnol.">
        <title>The genome and transcriptomes of the anti-tumor agent Clostridium novyi-NT.</title>
        <authorList>
            <person name="Bettegowda C."/>
            <person name="Huang X."/>
            <person name="Lin J."/>
            <person name="Cheong I."/>
            <person name="Kohli M."/>
            <person name="Szabo S.A."/>
            <person name="Zhang X."/>
            <person name="Diaz L.A. Jr."/>
            <person name="Velculescu V.E."/>
            <person name="Parmigiani G."/>
            <person name="Kinzler K.W."/>
            <person name="Vogelstein B."/>
            <person name="Zhou S."/>
        </authorList>
    </citation>
    <scope>NUCLEOTIDE SEQUENCE [LARGE SCALE GENOMIC DNA]</scope>
    <source>
        <strain>NT</strain>
    </source>
</reference>
<protein>
    <recommendedName>
        <fullName evidence="1">Phosphopantetheine adenylyltransferase</fullName>
        <ecNumber evidence="1">2.7.7.3</ecNumber>
    </recommendedName>
    <alternativeName>
        <fullName evidence="1">Dephospho-CoA pyrophosphorylase</fullName>
    </alternativeName>
    <alternativeName>
        <fullName evidence="1">Pantetheine-phosphate adenylyltransferase</fullName>
        <shortName evidence="1">PPAT</shortName>
    </alternativeName>
</protein>
<organism>
    <name type="scientific">Clostridium novyi (strain NT)</name>
    <dbReference type="NCBI Taxonomy" id="386415"/>
    <lineage>
        <taxon>Bacteria</taxon>
        <taxon>Bacillati</taxon>
        <taxon>Bacillota</taxon>
        <taxon>Clostridia</taxon>
        <taxon>Eubacteriales</taxon>
        <taxon>Clostridiaceae</taxon>
        <taxon>Clostridium</taxon>
    </lineage>
</organism>
<evidence type="ECO:0000255" key="1">
    <source>
        <dbReference type="HAMAP-Rule" id="MF_00151"/>
    </source>
</evidence>
<dbReference type="EC" id="2.7.7.3" evidence="1"/>
<dbReference type="EMBL" id="CP000382">
    <property type="protein sequence ID" value="ABK60420.1"/>
    <property type="molecule type" value="Genomic_DNA"/>
</dbReference>
<dbReference type="RefSeq" id="WP_011722300.1">
    <property type="nucleotide sequence ID" value="NC_008593.1"/>
</dbReference>
<dbReference type="SMR" id="A0Q101"/>
<dbReference type="STRING" id="386415.NT01CX_2230"/>
<dbReference type="KEGG" id="cno:NT01CX_2230"/>
<dbReference type="eggNOG" id="COG0669">
    <property type="taxonomic scope" value="Bacteria"/>
</dbReference>
<dbReference type="HOGENOM" id="CLU_100149_0_1_9"/>
<dbReference type="UniPathway" id="UPA00241">
    <property type="reaction ID" value="UER00355"/>
</dbReference>
<dbReference type="Proteomes" id="UP000008220">
    <property type="component" value="Chromosome"/>
</dbReference>
<dbReference type="GO" id="GO:0005737">
    <property type="term" value="C:cytoplasm"/>
    <property type="evidence" value="ECO:0007669"/>
    <property type="project" value="UniProtKB-SubCell"/>
</dbReference>
<dbReference type="GO" id="GO:0005524">
    <property type="term" value="F:ATP binding"/>
    <property type="evidence" value="ECO:0007669"/>
    <property type="project" value="UniProtKB-KW"/>
</dbReference>
<dbReference type="GO" id="GO:0004595">
    <property type="term" value="F:pantetheine-phosphate adenylyltransferase activity"/>
    <property type="evidence" value="ECO:0007669"/>
    <property type="project" value="UniProtKB-UniRule"/>
</dbReference>
<dbReference type="GO" id="GO:0015937">
    <property type="term" value="P:coenzyme A biosynthetic process"/>
    <property type="evidence" value="ECO:0007669"/>
    <property type="project" value="UniProtKB-UniRule"/>
</dbReference>
<dbReference type="CDD" id="cd02163">
    <property type="entry name" value="PPAT"/>
    <property type="match status" value="1"/>
</dbReference>
<dbReference type="Gene3D" id="3.40.50.620">
    <property type="entry name" value="HUPs"/>
    <property type="match status" value="1"/>
</dbReference>
<dbReference type="HAMAP" id="MF_00151">
    <property type="entry name" value="PPAT_bact"/>
    <property type="match status" value="1"/>
</dbReference>
<dbReference type="InterPro" id="IPR004821">
    <property type="entry name" value="Cyt_trans-like"/>
</dbReference>
<dbReference type="InterPro" id="IPR001980">
    <property type="entry name" value="PPAT"/>
</dbReference>
<dbReference type="InterPro" id="IPR014729">
    <property type="entry name" value="Rossmann-like_a/b/a_fold"/>
</dbReference>
<dbReference type="NCBIfam" id="TIGR01510">
    <property type="entry name" value="coaD_prev_kdtB"/>
    <property type="match status" value="1"/>
</dbReference>
<dbReference type="NCBIfam" id="TIGR00125">
    <property type="entry name" value="cyt_tran_rel"/>
    <property type="match status" value="1"/>
</dbReference>
<dbReference type="PANTHER" id="PTHR21342">
    <property type="entry name" value="PHOSPHOPANTETHEINE ADENYLYLTRANSFERASE"/>
    <property type="match status" value="1"/>
</dbReference>
<dbReference type="PANTHER" id="PTHR21342:SF1">
    <property type="entry name" value="PHOSPHOPANTETHEINE ADENYLYLTRANSFERASE"/>
    <property type="match status" value="1"/>
</dbReference>
<dbReference type="Pfam" id="PF01467">
    <property type="entry name" value="CTP_transf_like"/>
    <property type="match status" value="1"/>
</dbReference>
<dbReference type="PRINTS" id="PR01020">
    <property type="entry name" value="LPSBIOSNTHSS"/>
</dbReference>
<dbReference type="SUPFAM" id="SSF52374">
    <property type="entry name" value="Nucleotidylyl transferase"/>
    <property type="match status" value="1"/>
</dbReference>
<proteinExistence type="inferred from homology"/>
<feature type="chain" id="PRO_1000011128" description="Phosphopantetheine adenylyltransferase">
    <location>
        <begin position="1"/>
        <end position="161"/>
    </location>
</feature>
<feature type="binding site" evidence="1">
    <location>
        <begin position="9"/>
        <end position="10"/>
    </location>
    <ligand>
        <name>ATP</name>
        <dbReference type="ChEBI" id="CHEBI:30616"/>
    </ligand>
</feature>
<feature type="binding site" evidence="1">
    <location>
        <position position="9"/>
    </location>
    <ligand>
        <name>substrate</name>
    </ligand>
</feature>
<feature type="binding site" evidence="1">
    <location>
        <position position="17"/>
    </location>
    <ligand>
        <name>ATP</name>
        <dbReference type="ChEBI" id="CHEBI:30616"/>
    </ligand>
</feature>
<feature type="binding site" evidence="1">
    <location>
        <position position="41"/>
    </location>
    <ligand>
        <name>substrate</name>
    </ligand>
</feature>
<feature type="binding site" evidence="1">
    <location>
        <position position="73"/>
    </location>
    <ligand>
        <name>substrate</name>
    </ligand>
</feature>
<feature type="binding site" evidence="1">
    <location>
        <position position="87"/>
    </location>
    <ligand>
        <name>substrate</name>
    </ligand>
</feature>
<feature type="binding site" evidence="1">
    <location>
        <begin position="88"/>
        <end position="90"/>
    </location>
    <ligand>
        <name>ATP</name>
        <dbReference type="ChEBI" id="CHEBI:30616"/>
    </ligand>
</feature>
<feature type="binding site" evidence="1">
    <location>
        <position position="98"/>
    </location>
    <ligand>
        <name>ATP</name>
        <dbReference type="ChEBI" id="CHEBI:30616"/>
    </ligand>
</feature>
<feature type="binding site" evidence="1">
    <location>
        <begin position="123"/>
        <end position="129"/>
    </location>
    <ligand>
        <name>ATP</name>
        <dbReference type="ChEBI" id="CHEBI:30616"/>
    </ligand>
</feature>
<feature type="site" description="Transition state stabilizer" evidence="1">
    <location>
        <position position="17"/>
    </location>
</feature>
<comment type="function">
    <text evidence="1">Reversibly transfers an adenylyl group from ATP to 4'-phosphopantetheine, yielding dephospho-CoA (dPCoA) and pyrophosphate.</text>
</comment>
<comment type="catalytic activity">
    <reaction evidence="1">
        <text>(R)-4'-phosphopantetheine + ATP + H(+) = 3'-dephospho-CoA + diphosphate</text>
        <dbReference type="Rhea" id="RHEA:19801"/>
        <dbReference type="ChEBI" id="CHEBI:15378"/>
        <dbReference type="ChEBI" id="CHEBI:30616"/>
        <dbReference type="ChEBI" id="CHEBI:33019"/>
        <dbReference type="ChEBI" id="CHEBI:57328"/>
        <dbReference type="ChEBI" id="CHEBI:61723"/>
        <dbReference type="EC" id="2.7.7.3"/>
    </reaction>
</comment>
<comment type="cofactor">
    <cofactor evidence="1">
        <name>Mg(2+)</name>
        <dbReference type="ChEBI" id="CHEBI:18420"/>
    </cofactor>
</comment>
<comment type="pathway">
    <text evidence="1">Cofactor biosynthesis; coenzyme A biosynthesis; CoA from (R)-pantothenate: step 4/5.</text>
</comment>
<comment type="subunit">
    <text evidence="1">Homohexamer.</text>
</comment>
<comment type="subcellular location">
    <subcellularLocation>
        <location evidence="1">Cytoplasm</location>
    </subcellularLocation>
</comment>
<comment type="similarity">
    <text evidence="1">Belongs to the bacterial CoaD family.</text>
</comment>
<accession>A0Q101</accession>
<name>COAD_CLONN</name>
<sequence>MRVAIYPGSFDPITEGHLDIIKRASKVFDEVIVSVLVNPDKKGLFSIEERVKLIEKVTEDIDNVKAESFEGLLVDYMKEKDAKVIIKGLRVVSDFEYELQMAHMNKKLDSSIETVFMMTNAKYSYLSSSSIKQVVMFGGCIEGLVPNKIIKDIINKIGKVR</sequence>
<gene>
    <name evidence="1" type="primary">coaD</name>
    <name type="ordered locus">NT01CX_2230</name>
</gene>